<organism>
    <name type="scientific">Conus bayani</name>
    <name type="common">Bayan's cone</name>
    <name type="synonym">Stellaconus bayani</name>
    <dbReference type="NCBI Taxonomy" id="2070216"/>
    <lineage>
        <taxon>Eukaryota</taxon>
        <taxon>Metazoa</taxon>
        <taxon>Spiralia</taxon>
        <taxon>Lophotrochozoa</taxon>
        <taxon>Mollusca</taxon>
        <taxon>Gastropoda</taxon>
        <taxon>Caenogastropoda</taxon>
        <taxon>Neogastropoda</taxon>
        <taxon>Conoidea</taxon>
        <taxon>Conidae</taxon>
        <taxon>Conus</taxon>
        <taxon>Splinoconus</taxon>
    </lineage>
</organism>
<keyword id="KW-0903">Direct protein sequencing</keyword>
<keyword id="KW-1015">Disulfide bond</keyword>
<keyword id="KW-0379">Hydroxylation</keyword>
<keyword id="KW-0964">Secreted</keyword>
<keyword id="KW-0732">Signal</keyword>
<keyword id="KW-0800">Toxin</keyword>
<evidence type="ECO:0000250" key="1">
    <source>
        <dbReference type="UniProtKB" id="P0DPM3"/>
    </source>
</evidence>
<evidence type="ECO:0000250" key="2">
    <source>
        <dbReference type="UniProtKB" id="Q26443"/>
    </source>
</evidence>
<evidence type="ECO:0000255" key="3"/>
<evidence type="ECO:0000269" key="4">
    <source>
    </source>
</evidence>
<evidence type="ECO:0000303" key="5">
    <source>
    </source>
</evidence>
<evidence type="ECO:0000305" key="6"/>
<evidence type="ECO:0000305" key="7">
    <source>
    </source>
</evidence>
<name>CU61_CONBY</name>
<accession>P0DTJ8</accession>
<comment type="subcellular location">
    <subcellularLocation>
        <location evidence="4">Secreted</location>
    </subcellularLocation>
</comment>
<comment type="tissue specificity">
    <text evidence="7">Expressed by the venom duct.</text>
</comment>
<comment type="domain">
    <text evidence="6">The cysteine framework is VI/VII (C-C-CC-C-C).</text>
</comment>
<comment type="domain">
    <text evidence="1">Displays a mini-granulin fold, a structure composed of two short, stacked beta-hairpins connected by two parallel disulfide bonds. This newly described fold is derived from the same cysteine connectivity as knottins (ICK fold). The name 'mini-granulin fold' comes from the structural homology with the N-terminal region of the human granulin.</text>
</comment>
<comment type="mass spectrometry"/>
<comment type="similarity">
    <text evidence="6">Belongs to the conotoxin U superfamily.</text>
</comment>
<reference key="1">
    <citation type="journal article" date="2021" name="Mar. Drugs">
        <title>Diversity of Conopeptides and Conoenzymes from the Venom Duct of the Marine Cone Snail Conus bayani as Determined from Transcriptomic and Proteomic Analyses.</title>
        <authorList>
            <person name="Rajaian Pushpabai R."/>
            <person name="Wilson Alphonse C.R."/>
            <person name="Mani R."/>
            <person name="Arun Apte D."/>
            <person name="Franklin J.B."/>
        </authorList>
    </citation>
    <scope>NUCLEOTIDE SEQUENCE [MRNA]</scope>
    <scope>PROTEIN SEQUENCE OF 53-79</scope>
    <scope>MASS SPECTROMETRY</scope>
    <scope>SUBCELLULAR LOCATION</scope>
    <scope>HYDROXYLATION AT PRO-59; PRO-67; PRO-68 AND PRO-73</scope>
    <source>
        <tissue>Venom</tissue>
        <tissue>Venom duct</tissue>
    </source>
</reference>
<feature type="signal peptide" evidence="3">
    <location>
        <begin position="1"/>
        <end position="24"/>
    </location>
</feature>
<feature type="propeptide" id="PRO_0000454994" evidence="7">
    <location>
        <begin position="25"/>
        <end position="52"/>
    </location>
</feature>
<feature type="peptide" id="PRO_0000454995" description="Conotoxin ba-2281" evidence="4">
    <location>
        <begin position="53"/>
        <end position="79"/>
    </location>
</feature>
<feature type="modified residue" description="4-hydroxyproline" evidence="4">
    <location>
        <position position="59"/>
    </location>
</feature>
<feature type="modified residue" description="4-hydroxyproline" evidence="4">
    <location>
        <position position="67"/>
    </location>
</feature>
<feature type="modified residue" description="4-hydroxyproline" evidence="4">
    <location>
        <position position="68"/>
    </location>
</feature>
<feature type="modified residue" description="4-hydroxyproline" evidence="4">
    <location>
        <position position="73"/>
    </location>
</feature>
<feature type="disulfide bond" evidence="2">
    <location>
        <begin position="58"/>
        <end position="66"/>
    </location>
</feature>
<feature type="disulfide bond" evidence="2">
    <location>
        <begin position="61"/>
        <end position="71"/>
    </location>
</feature>
<feature type="disulfide bond" evidence="2">
    <location>
        <begin position="65"/>
        <end position="76"/>
    </location>
</feature>
<proteinExistence type="evidence at protein level"/>
<protein>
    <recommendedName>
        <fullName evidence="5">Conotoxin ba-2281</fullName>
    </recommendedName>
    <alternativeName>
        <fullName evidence="6">Conotoxin ba6.1</fullName>
    </alternativeName>
</protein>
<sequence>MNRMGFFLMLTAAVLLTSLVCTEATPADESKVKRARWSRIEGSRLFRHRLPKSSQSTCPYCQISCCPPAYCQPSGCRGP</sequence>
<dbReference type="GO" id="GO:0005576">
    <property type="term" value="C:extracellular region"/>
    <property type="evidence" value="ECO:0007669"/>
    <property type="project" value="UniProtKB-SubCell"/>
</dbReference>
<dbReference type="GO" id="GO:0090729">
    <property type="term" value="F:toxin activity"/>
    <property type="evidence" value="ECO:0007669"/>
    <property type="project" value="UniProtKB-KW"/>
</dbReference>